<accession>C0M8H9</accession>
<protein>
    <recommendedName>
        <fullName evidence="1">Elongation factor 4</fullName>
        <shortName evidence="1">EF-4</shortName>
        <ecNumber evidence="1">3.6.5.n1</ecNumber>
    </recommendedName>
    <alternativeName>
        <fullName evidence="1">Ribosomal back-translocase LepA</fullName>
    </alternativeName>
</protein>
<sequence>MNSQELKKRQENIRNFSIIAHIDHGKSTLADRILEKTETVSSREMQAQLLDSMDLERERGITIKLNAIELNYKAKNGQDYIFHLIDTPGHVDFTYEVSRSLAACEGAVLVVDAAQGIEAQTLANVYLALDNDLEILPVINKIDLPAADPERVRQEIEDVIGLDASEAVLASAKSGIGIEDILEQIVEKVPAPSGDVDQPLQALIFDSVYDAYRGVILQVRVVNGMVKPGDTIQMMSNGKTFDVTEVGIFTPKAIGRDFLATGDVGYIAASIKTVADTRVGDTVTLATNPAAEPLHGYKQMNPMVFAGIYPIESNKYNDLREALEKLQLNDASLQFEPETSQALGFGFRCGFLGLLHMDVIQERLEREFNIDLIMTAPSVVYHVNITDGDMLEVSNPSEFPDPTKVDSIEEPYVKAQIMVPQEFVGAVMELAQRKRGDFVTMDYIDDNRVNVIYHIPLAEIVFDFFDKLKSSTRGYASFDYEIAEYRRSQLVKMDILLNGDKVDALSFIVHRAFAYERGKLIVEKLKKIIPRQQFEVPIQAAIGQKIVARSDIKALRKNVLAKCYGGDVSRKRKLLEKQKAGKKRMKAIGSVEVPQEAFLSVLSMDDESKK</sequence>
<reference key="1">
    <citation type="journal article" date="2009" name="PLoS Pathog.">
        <title>Genomic evidence for the evolution of Streptococcus equi: host restriction, increased virulence, and genetic exchange with human pathogens.</title>
        <authorList>
            <person name="Holden M.T.G."/>
            <person name="Heather Z."/>
            <person name="Paillot R."/>
            <person name="Steward K.F."/>
            <person name="Webb K."/>
            <person name="Ainslie F."/>
            <person name="Jourdan T."/>
            <person name="Bason N.C."/>
            <person name="Holroyd N.E."/>
            <person name="Mungall K."/>
            <person name="Quail M.A."/>
            <person name="Sanders M."/>
            <person name="Simmonds M."/>
            <person name="Willey D."/>
            <person name="Brooks K."/>
            <person name="Aanensen D.M."/>
            <person name="Spratt B.G."/>
            <person name="Jolley K.A."/>
            <person name="Maiden M.C.J."/>
            <person name="Kehoe M."/>
            <person name="Chanter N."/>
            <person name="Bentley S.D."/>
            <person name="Robinson C."/>
            <person name="Maskell D.J."/>
            <person name="Parkhill J."/>
            <person name="Waller A.S."/>
        </authorList>
    </citation>
    <scope>NUCLEOTIDE SEQUENCE [LARGE SCALE GENOMIC DNA]</scope>
    <source>
        <strain>4047</strain>
    </source>
</reference>
<dbReference type="EC" id="3.6.5.n1" evidence="1"/>
<dbReference type="EMBL" id="FM204883">
    <property type="protein sequence ID" value="CAW94213.1"/>
    <property type="molecule type" value="Genomic_DNA"/>
</dbReference>
<dbReference type="RefSeq" id="WP_012679710.1">
    <property type="nucleotide sequence ID" value="NC_012471.1"/>
</dbReference>
<dbReference type="SMR" id="C0M8H9"/>
<dbReference type="KEGG" id="seu:SEQ_1379"/>
<dbReference type="HOGENOM" id="CLU_009995_3_3_9"/>
<dbReference type="OrthoDB" id="9801591at2"/>
<dbReference type="Proteomes" id="UP000001365">
    <property type="component" value="Chromosome"/>
</dbReference>
<dbReference type="GO" id="GO:0005886">
    <property type="term" value="C:plasma membrane"/>
    <property type="evidence" value="ECO:0007669"/>
    <property type="project" value="UniProtKB-SubCell"/>
</dbReference>
<dbReference type="GO" id="GO:0005525">
    <property type="term" value="F:GTP binding"/>
    <property type="evidence" value="ECO:0007669"/>
    <property type="project" value="UniProtKB-UniRule"/>
</dbReference>
<dbReference type="GO" id="GO:0003924">
    <property type="term" value="F:GTPase activity"/>
    <property type="evidence" value="ECO:0007669"/>
    <property type="project" value="UniProtKB-UniRule"/>
</dbReference>
<dbReference type="GO" id="GO:0043022">
    <property type="term" value="F:ribosome binding"/>
    <property type="evidence" value="ECO:0007669"/>
    <property type="project" value="UniProtKB-UniRule"/>
</dbReference>
<dbReference type="GO" id="GO:0003746">
    <property type="term" value="F:translation elongation factor activity"/>
    <property type="evidence" value="ECO:0007669"/>
    <property type="project" value="UniProtKB-UniRule"/>
</dbReference>
<dbReference type="GO" id="GO:0045727">
    <property type="term" value="P:positive regulation of translation"/>
    <property type="evidence" value="ECO:0007669"/>
    <property type="project" value="UniProtKB-UniRule"/>
</dbReference>
<dbReference type="CDD" id="cd03699">
    <property type="entry name" value="EF4_II"/>
    <property type="match status" value="1"/>
</dbReference>
<dbReference type="CDD" id="cd16260">
    <property type="entry name" value="EF4_III"/>
    <property type="match status" value="1"/>
</dbReference>
<dbReference type="CDD" id="cd01890">
    <property type="entry name" value="LepA"/>
    <property type="match status" value="1"/>
</dbReference>
<dbReference type="CDD" id="cd03709">
    <property type="entry name" value="lepA_C"/>
    <property type="match status" value="1"/>
</dbReference>
<dbReference type="FunFam" id="3.40.50.300:FF:000078">
    <property type="entry name" value="Elongation factor 4"/>
    <property type="match status" value="1"/>
</dbReference>
<dbReference type="FunFam" id="2.40.30.10:FF:000015">
    <property type="entry name" value="Translation factor GUF1, mitochondrial"/>
    <property type="match status" value="1"/>
</dbReference>
<dbReference type="FunFam" id="3.30.70.240:FF:000007">
    <property type="entry name" value="Translation factor GUF1, mitochondrial"/>
    <property type="match status" value="1"/>
</dbReference>
<dbReference type="FunFam" id="3.30.70.2570:FF:000001">
    <property type="entry name" value="Translation factor GUF1, mitochondrial"/>
    <property type="match status" value="1"/>
</dbReference>
<dbReference type="FunFam" id="3.30.70.870:FF:000004">
    <property type="entry name" value="Translation factor GUF1, mitochondrial"/>
    <property type="match status" value="1"/>
</dbReference>
<dbReference type="Gene3D" id="3.30.70.240">
    <property type="match status" value="1"/>
</dbReference>
<dbReference type="Gene3D" id="3.30.70.2570">
    <property type="entry name" value="Elongation factor 4, C-terminal domain"/>
    <property type="match status" value="1"/>
</dbReference>
<dbReference type="Gene3D" id="3.30.70.870">
    <property type="entry name" value="Elongation Factor G (Translational Gtpase), domain 3"/>
    <property type="match status" value="1"/>
</dbReference>
<dbReference type="Gene3D" id="3.40.50.300">
    <property type="entry name" value="P-loop containing nucleotide triphosphate hydrolases"/>
    <property type="match status" value="1"/>
</dbReference>
<dbReference type="Gene3D" id="2.40.30.10">
    <property type="entry name" value="Translation factors"/>
    <property type="match status" value="1"/>
</dbReference>
<dbReference type="HAMAP" id="MF_00071">
    <property type="entry name" value="LepA"/>
    <property type="match status" value="1"/>
</dbReference>
<dbReference type="InterPro" id="IPR006297">
    <property type="entry name" value="EF-4"/>
</dbReference>
<dbReference type="InterPro" id="IPR041095">
    <property type="entry name" value="EFG_II"/>
</dbReference>
<dbReference type="InterPro" id="IPR035647">
    <property type="entry name" value="EFG_III/V"/>
</dbReference>
<dbReference type="InterPro" id="IPR000640">
    <property type="entry name" value="EFG_V-like"/>
</dbReference>
<dbReference type="InterPro" id="IPR004161">
    <property type="entry name" value="EFTu-like_2"/>
</dbReference>
<dbReference type="InterPro" id="IPR031157">
    <property type="entry name" value="G_TR_CS"/>
</dbReference>
<dbReference type="InterPro" id="IPR038363">
    <property type="entry name" value="LepA_C_sf"/>
</dbReference>
<dbReference type="InterPro" id="IPR013842">
    <property type="entry name" value="LepA_CTD"/>
</dbReference>
<dbReference type="InterPro" id="IPR035654">
    <property type="entry name" value="LepA_IV"/>
</dbReference>
<dbReference type="InterPro" id="IPR027417">
    <property type="entry name" value="P-loop_NTPase"/>
</dbReference>
<dbReference type="InterPro" id="IPR005225">
    <property type="entry name" value="Small_GTP-bd"/>
</dbReference>
<dbReference type="InterPro" id="IPR000795">
    <property type="entry name" value="T_Tr_GTP-bd_dom"/>
</dbReference>
<dbReference type="InterPro" id="IPR009000">
    <property type="entry name" value="Transl_B-barrel_sf"/>
</dbReference>
<dbReference type="NCBIfam" id="TIGR01393">
    <property type="entry name" value="lepA"/>
    <property type="match status" value="1"/>
</dbReference>
<dbReference type="NCBIfam" id="TIGR00231">
    <property type="entry name" value="small_GTP"/>
    <property type="match status" value="1"/>
</dbReference>
<dbReference type="PANTHER" id="PTHR43512:SF4">
    <property type="entry name" value="TRANSLATION FACTOR GUF1 HOMOLOG, CHLOROPLASTIC"/>
    <property type="match status" value="1"/>
</dbReference>
<dbReference type="PANTHER" id="PTHR43512">
    <property type="entry name" value="TRANSLATION FACTOR GUF1-RELATED"/>
    <property type="match status" value="1"/>
</dbReference>
<dbReference type="Pfam" id="PF00679">
    <property type="entry name" value="EFG_C"/>
    <property type="match status" value="1"/>
</dbReference>
<dbReference type="Pfam" id="PF14492">
    <property type="entry name" value="EFG_III"/>
    <property type="match status" value="1"/>
</dbReference>
<dbReference type="Pfam" id="PF00009">
    <property type="entry name" value="GTP_EFTU"/>
    <property type="match status" value="1"/>
</dbReference>
<dbReference type="Pfam" id="PF03144">
    <property type="entry name" value="GTP_EFTU_D2"/>
    <property type="match status" value="1"/>
</dbReference>
<dbReference type="Pfam" id="PF06421">
    <property type="entry name" value="LepA_C"/>
    <property type="match status" value="1"/>
</dbReference>
<dbReference type="PRINTS" id="PR00315">
    <property type="entry name" value="ELONGATNFCT"/>
</dbReference>
<dbReference type="SMART" id="SM00838">
    <property type="entry name" value="EFG_C"/>
    <property type="match status" value="1"/>
</dbReference>
<dbReference type="SUPFAM" id="SSF54980">
    <property type="entry name" value="EF-G C-terminal domain-like"/>
    <property type="match status" value="2"/>
</dbReference>
<dbReference type="SUPFAM" id="SSF52540">
    <property type="entry name" value="P-loop containing nucleoside triphosphate hydrolases"/>
    <property type="match status" value="1"/>
</dbReference>
<dbReference type="SUPFAM" id="SSF50447">
    <property type="entry name" value="Translation proteins"/>
    <property type="match status" value="1"/>
</dbReference>
<dbReference type="PROSITE" id="PS00301">
    <property type="entry name" value="G_TR_1"/>
    <property type="match status" value="1"/>
</dbReference>
<dbReference type="PROSITE" id="PS51722">
    <property type="entry name" value="G_TR_2"/>
    <property type="match status" value="1"/>
</dbReference>
<feature type="chain" id="PRO_1000190829" description="Elongation factor 4">
    <location>
        <begin position="1"/>
        <end position="610"/>
    </location>
</feature>
<feature type="domain" description="tr-type G">
    <location>
        <begin position="11"/>
        <end position="193"/>
    </location>
</feature>
<feature type="binding site" evidence="1">
    <location>
        <begin position="23"/>
        <end position="28"/>
    </location>
    <ligand>
        <name>GTP</name>
        <dbReference type="ChEBI" id="CHEBI:37565"/>
    </ligand>
</feature>
<feature type="binding site" evidence="1">
    <location>
        <begin position="140"/>
        <end position="143"/>
    </location>
    <ligand>
        <name>GTP</name>
        <dbReference type="ChEBI" id="CHEBI:37565"/>
    </ligand>
</feature>
<name>LEPA_STRE4</name>
<organism>
    <name type="scientific">Streptococcus equi subsp. equi (strain 4047)</name>
    <dbReference type="NCBI Taxonomy" id="553482"/>
    <lineage>
        <taxon>Bacteria</taxon>
        <taxon>Bacillati</taxon>
        <taxon>Bacillota</taxon>
        <taxon>Bacilli</taxon>
        <taxon>Lactobacillales</taxon>
        <taxon>Streptococcaceae</taxon>
        <taxon>Streptococcus</taxon>
    </lineage>
</organism>
<gene>
    <name evidence="1" type="primary">lepA</name>
    <name type="ordered locus">SEQ_1379</name>
</gene>
<keyword id="KW-1003">Cell membrane</keyword>
<keyword id="KW-0342">GTP-binding</keyword>
<keyword id="KW-0378">Hydrolase</keyword>
<keyword id="KW-0472">Membrane</keyword>
<keyword id="KW-0547">Nucleotide-binding</keyword>
<keyword id="KW-0648">Protein biosynthesis</keyword>
<proteinExistence type="inferred from homology"/>
<comment type="function">
    <text evidence="1">Required for accurate and efficient protein synthesis under certain stress conditions. May act as a fidelity factor of the translation reaction, by catalyzing a one-codon backward translocation of tRNAs on improperly translocated ribosomes. Back-translocation proceeds from a post-translocation (POST) complex to a pre-translocation (PRE) complex, thus giving elongation factor G a second chance to translocate the tRNAs correctly. Binds to ribosomes in a GTP-dependent manner.</text>
</comment>
<comment type="catalytic activity">
    <reaction evidence="1">
        <text>GTP + H2O = GDP + phosphate + H(+)</text>
        <dbReference type="Rhea" id="RHEA:19669"/>
        <dbReference type="ChEBI" id="CHEBI:15377"/>
        <dbReference type="ChEBI" id="CHEBI:15378"/>
        <dbReference type="ChEBI" id="CHEBI:37565"/>
        <dbReference type="ChEBI" id="CHEBI:43474"/>
        <dbReference type="ChEBI" id="CHEBI:58189"/>
        <dbReference type="EC" id="3.6.5.n1"/>
    </reaction>
</comment>
<comment type="subcellular location">
    <subcellularLocation>
        <location evidence="1">Cell membrane</location>
        <topology evidence="1">Peripheral membrane protein</topology>
        <orientation evidence="1">Cytoplasmic side</orientation>
    </subcellularLocation>
</comment>
<comment type="similarity">
    <text evidence="1">Belongs to the TRAFAC class translation factor GTPase superfamily. Classic translation factor GTPase family. LepA subfamily.</text>
</comment>
<evidence type="ECO:0000255" key="1">
    <source>
        <dbReference type="HAMAP-Rule" id="MF_00071"/>
    </source>
</evidence>